<comment type="function">
    <text evidence="3 4">Transcriptional repressor regulating endoreduplication through control of A-type cyclins expression (PubMed:17012601). Does not bind to promoter sequences (in vitro) and may act by interacting with tissue-specific transcription factors (PubMed:17012601). Enhances the endocycle in endoreduplicating cells in seedlings (PubMed:17012601). Required for efficient splicing (PubMed:25568310).</text>
</comment>
<comment type="subunit">
    <text evidence="4">Interacts with STIPL1/NTR1 (PubMed:25568310).</text>
</comment>
<comment type="subcellular location">
    <subcellularLocation>
        <location evidence="3">Nucleus</location>
    </subcellularLocation>
</comment>
<comment type="developmental stage">
    <text evidence="3">Gradual reduction of expression as the first leaf develops. 90% reduction of expression at day 20 after imbibition.</text>
</comment>
<comment type="domain">
    <text evidence="3">The C-terminal region (474-908) is responsible for the repressor activity.</text>
</comment>
<comment type="disruption phenotype">
    <text evidence="3">Reduction of polyploidy and inhibition of hypocotyl elongation.</text>
</comment>
<comment type="similarity">
    <text evidence="6">Belongs to the GCF family.</text>
</comment>
<evidence type="ECO:0000255" key="1"/>
<evidence type="ECO:0000256" key="2">
    <source>
        <dbReference type="SAM" id="MobiDB-lite"/>
    </source>
</evidence>
<evidence type="ECO:0000269" key="3">
    <source>
    </source>
</evidence>
<evidence type="ECO:0000269" key="4">
    <source>
    </source>
</evidence>
<evidence type="ECO:0000303" key="5">
    <source>
    </source>
</evidence>
<evidence type="ECO:0000305" key="6"/>
<evidence type="ECO:0000312" key="7">
    <source>
        <dbReference type="Araport" id="AT5G08550"/>
    </source>
</evidence>
<evidence type="ECO:0000312" key="8">
    <source>
        <dbReference type="EMBL" id="BAB10004.1"/>
    </source>
</evidence>
<organism>
    <name type="scientific">Arabidopsis thaliana</name>
    <name type="common">Mouse-ear cress</name>
    <dbReference type="NCBI Taxonomy" id="3702"/>
    <lineage>
        <taxon>Eukaryota</taxon>
        <taxon>Viridiplantae</taxon>
        <taxon>Streptophyta</taxon>
        <taxon>Embryophyta</taxon>
        <taxon>Tracheophyta</taxon>
        <taxon>Spermatophyta</taxon>
        <taxon>Magnoliopsida</taxon>
        <taxon>eudicotyledons</taxon>
        <taxon>Gunneridae</taxon>
        <taxon>Pentapetalae</taxon>
        <taxon>rosids</taxon>
        <taxon>malvids</taxon>
        <taxon>Brassicales</taxon>
        <taxon>Brassicaceae</taxon>
        <taxon>Camelineae</taxon>
        <taxon>Arabidopsis</taxon>
    </lineage>
</organism>
<feature type="chain" id="PRO_0000437690" description="Transcriptional repressor ILP1">
    <location>
        <begin position="1"/>
        <end position="908"/>
    </location>
</feature>
<feature type="region of interest" description="Disordered" evidence="2">
    <location>
        <begin position="1"/>
        <end position="113"/>
    </location>
</feature>
<feature type="region of interest" description="Disordered" evidence="2">
    <location>
        <begin position="238"/>
        <end position="277"/>
    </location>
</feature>
<feature type="region of interest" description="Disordered" evidence="2">
    <location>
        <begin position="513"/>
        <end position="574"/>
    </location>
</feature>
<feature type="coiled-coil region" evidence="1">
    <location>
        <begin position="426"/>
        <end position="453"/>
    </location>
</feature>
<feature type="compositionally biased region" description="Low complexity" evidence="2">
    <location>
        <begin position="25"/>
        <end position="47"/>
    </location>
</feature>
<feature type="compositionally biased region" description="Basic and acidic residues" evidence="2">
    <location>
        <begin position="513"/>
        <end position="530"/>
    </location>
</feature>
<keyword id="KW-0175">Coiled coil</keyword>
<keyword id="KW-0539">Nucleus</keyword>
<keyword id="KW-1185">Reference proteome</keyword>
<keyword id="KW-0678">Repressor</keyword>
<keyword id="KW-0804">Transcription</keyword>
<keyword id="KW-0805">Transcription regulation</keyword>
<protein>
    <recommendedName>
        <fullName evidence="5">Transcriptional repressor ILP1</fullName>
    </recommendedName>
    <alternativeName>
        <fullName evidence="5">INCREASED LEVEL OF POLYPLOIDY 1</fullName>
    </alternativeName>
</protein>
<name>ILP1_ARATH</name>
<accession>Q9FNN3</accession>
<gene>
    <name evidence="5" type="primary">ILP1</name>
    <name evidence="7" type="ordered locus">At5g08550</name>
    <name evidence="8" type="ORF">MAH20.11</name>
</gene>
<proteinExistence type="evidence at protein level"/>
<dbReference type="EMBL" id="AB253763">
    <property type="protein sequence ID" value="BAF36503.1"/>
    <property type="molecule type" value="mRNA"/>
</dbReference>
<dbReference type="EMBL" id="AB006697">
    <property type="protein sequence ID" value="BAB10004.1"/>
    <property type="molecule type" value="Genomic_DNA"/>
</dbReference>
<dbReference type="EMBL" id="CP002688">
    <property type="protein sequence ID" value="AED91319.1"/>
    <property type="molecule type" value="Genomic_DNA"/>
</dbReference>
<dbReference type="RefSeq" id="NP_196472.1">
    <property type="nucleotide sequence ID" value="NM_120941.2"/>
</dbReference>
<dbReference type="SMR" id="Q9FNN3"/>
<dbReference type="FunCoup" id="Q9FNN3">
    <property type="interactions" value="3834"/>
</dbReference>
<dbReference type="STRING" id="3702.Q9FNN3"/>
<dbReference type="GlyGen" id="Q9FNN3">
    <property type="glycosylation" value="1 site"/>
</dbReference>
<dbReference type="iPTMnet" id="Q9FNN3"/>
<dbReference type="PaxDb" id="3702-AT5G08550.1"/>
<dbReference type="ProteomicsDB" id="228863"/>
<dbReference type="EnsemblPlants" id="AT5G08550.1">
    <property type="protein sequence ID" value="AT5G08550.1"/>
    <property type="gene ID" value="AT5G08550"/>
</dbReference>
<dbReference type="GeneID" id="830755"/>
<dbReference type="Gramene" id="AT5G08550.1">
    <property type="protein sequence ID" value="AT5G08550.1"/>
    <property type="gene ID" value="AT5G08550"/>
</dbReference>
<dbReference type="KEGG" id="ath:AT5G08550"/>
<dbReference type="Araport" id="AT5G08550"/>
<dbReference type="TAIR" id="AT5G08550">
    <property type="gene designation" value="ILP1"/>
</dbReference>
<dbReference type="eggNOG" id="KOG2136">
    <property type="taxonomic scope" value="Eukaryota"/>
</dbReference>
<dbReference type="HOGENOM" id="CLU_011441_0_0_1"/>
<dbReference type="InParanoid" id="Q9FNN3"/>
<dbReference type="OMA" id="MKNICLW"/>
<dbReference type="PhylomeDB" id="Q9FNN3"/>
<dbReference type="PRO" id="PR:Q9FNN3"/>
<dbReference type="Proteomes" id="UP000006548">
    <property type="component" value="Chromosome 5"/>
</dbReference>
<dbReference type="ExpressionAtlas" id="Q9FNN3">
    <property type="expression patterns" value="baseline and differential"/>
</dbReference>
<dbReference type="GO" id="GO:0005634">
    <property type="term" value="C:nucleus"/>
    <property type="evidence" value="ECO:0000314"/>
    <property type="project" value="TAIR"/>
</dbReference>
<dbReference type="GO" id="GO:0003677">
    <property type="term" value="F:DNA binding"/>
    <property type="evidence" value="ECO:0007669"/>
    <property type="project" value="InterPro"/>
</dbReference>
<dbReference type="GO" id="GO:0030371">
    <property type="term" value="F:translation repressor activity"/>
    <property type="evidence" value="ECO:0000314"/>
    <property type="project" value="TAIR"/>
</dbReference>
<dbReference type="GO" id="GO:0042023">
    <property type="term" value="P:DNA endoreduplication"/>
    <property type="evidence" value="ECO:0000315"/>
    <property type="project" value="TAIR"/>
</dbReference>
<dbReference type="GO" id="GO:0000398">
    <property type="term" value="P:mRNA splicing, via spliceosome"/>
    <property type="evidence" value="ECO:0000315"/>
    <property type="project" value="TAIR"/>
</dbReference>
<dbReference type="GO" id="GO:0045892">
    <property type="term" value="P:negative regulation of DNA-templated transcription"/>
    <property type="evidence" value="ECO:0000314"/>
    <property type="project" value="TAIR"/>
</dbReference>
<dbReference type="InterPro" id="IPR012890">
    <property type="entry name" value="GCFC2-like"/>
</dbReference>
<dbReference type="InterPro" id="IPR022783">
    <property type="entry name" value="GCFC_dom"/>
</dbReference>
<dbReference type="PANTHER" id="PTHR12214">
    <property type="entry name" value="GC-RICH SEQUENCE DNA-BINDING FACTOR"/>
    <property type="match status" value="1"/>
</dbReference>
<dbReference type="PANTHER" id="PTHR12214:SF0">
    <property type="entry name" value="LD29489P"/>
    <property type="match status" value="1"/>
</dbReference>
<dbReference type="Pfam" id="PF07842">
    <property type="entry name" value="GCFC"/>
    <property type="match status" value="1"/>
</dbReference>
<reference key="1">
    <citation type="journal article" date="2006" name="Plant Cell">
        <title>Increased level of polyploidy1, a conserved repressor of CYCLINA2 transcription, controls endoreduplication in Arabidopsis.</title>
        <authorList>
            <person name="Yoshizumi T."/>
            <person name="Tsumoto Y."/>
            <person name="Takiguchi T."/>
            <person name="Nagata N."/>
            <person name="Yamamoto Y.Y."/>
            <person name="Kawashima M."/>
            <person name="Ichikawa T."/>
            <person name="Nakazawa M."/>
            <person name="Yamamoto N."/>
            <person name="Matsui M."/>
        </authorList>
    </citation>
    <scope>NUCLEOTIDE SEQUENCE [MRNA]</scope>
    <scope>FUNCTION</scope>
    <scope>SUBCELLULAR LOCATION</scope>
    <scope>DISRUPTION PHENOTYPE</scope>
    <scope>DOMAIN</scope>
    <scope>DEVELOPMENTAL STAGE</scope>
</reference>
<reference key="2">
    <citation type="journal article" date="1997" name="DNA Res.">
        <title>Structural analysis of Arabidopsis thaliana chromosome 5. II. Sequence features of the regions of 1,044,062 bp covered by thirteen physically assigned P1 clones.</title>
        <authorList>
            <person name="Kotani H."/>
            <person name="Nakamura Y."/>
            <person name="Sato S."/>
            <person name="Kaneko T."/>
            <person name="Asamizu E."/>
            <person name="Miyajima N."/>
            <person name="Tabata S."/>
        </authorList>
    </citation>
    <scope>NUCLEOTIDE SEQUENCE [LARGE SCALE GENOMIC DNA]</scope>
    <source>
        <strain>cv. Columbia</strain>
    </source>
</reference>
<reference key="3">
    <citation type="journal article" date="2017" name="Plant J.">
        <title>Araport11: a complete reannotation of the Arabidopsis thaliana reference genome.</title>
        <authorList>
            <person name="Cheng C.Y."/>
            <person name="Krishnakumar V."/>
            <person name="Chan A.P."/>
            <person name="Thibaud-Nissen F."/>
            <person name="Schobel S."/>
            <person name="Town C.D."/>
        </authorList>
    </citation>
    <scope>GENOME REANNOTATION</scope>
    <source>
        <strain>cv. Columbia</strain>
    </source>
</reference>
<reference key="4">
    <citation type="journal article" date="2015" name="EMBO J.">
        <title>NTR1 is required for transcription elongation checkpoints at alternative exons in Arabidopsis.</title>
        <authorList>
            <person name="Dolata J."/>
            <person name="Guo Y."/>
            <person name="Kolowerzo A."/>
            <person name="Smolinski D."/>
            <person name="Brzyzek G."/>
            <person name="Jarmolowski A."/>
            <person name="Swiezewski S."/>
        </authorList>
    </citation>
    <scope>FUNCTION</scope>
    <scope>INTERACTION WITH STIPL1</scope>
</reference>
<sequence>MGSNRPKNFRRRGDDGGDEIDGKVATPSSKPTSTLSSSKPKTLSASAPKKKLLSFADDEEEEEDGAPRVTIKPKNGRDRVKSSSRLGVSGSSHRHSSTKERRPASSNVLPQAGSYSKEALLELQKNTRTLPYSRSSANAEPKVVLKGLIKPPQDHEQQSLKDVVKQVSDLDFDEEGEEEQHEDAFADQAAIIRAKKERMRQSRSAPAPDYISLDGGIVNHSAVEGVSDEDADFQGIFVGPRPQKDDKKGVFDFGDENPTAKETTTSSIYEDEDEEDKLWEEEQFKKGIGKRMDEGSHRTVTSNGIGVPLHSKQQTLPQQQPQMYAYHAGTPMPNVSVAPTIGPATSVDTLPMSQQAELAKKALKDNVKKLKESHAKTLSSLTKTDENLTASLMSITALESSLSAAGDKYVFMQKLRDFISVICDFMQNKGSLIEEIEDQMKELNEKHALSILERRIADNNDEMIELGAAVKAAMTVLNKHGSSSSVIAAATGAALAASTSIRQQMNQPVKLDEFGRDENLQKRREVEQRAAARQKRRARFENKRASAMEVDGPSLKIEGESSTDESDTETSAYKETRDSLLQCADKVFSDASEEYSQLSKVKARFERWKRDYSSTYRDAYMSLTVPSIFSPYVRLELLKWDPLHQDVDFFDMKWHGLLFDYGKPEDGDDFAPDDTDANLVPELVEKVAIPILHHQIVRCWDILSTRETRNAVAATSLVTNYVSASSEALAELFAAIRARLVEAIAAISVPTWDPLVLKAVPNTPQVAAYRFGTSVRLMRNICMWKDILALPVLENLALSDLLFGKVLPHVRSIASNIHDAVTRTERIVASLSGVWTGPSVTRTHSRPLQPLVDCTLTLRRILEKRLGSGLDDAETTGLARRLKRILVELHEHDHAREIVRTFNLKEAV</sequence>